<gene>
    <name type="primary">PEPP</name>
    <name type="ORF">VDBG_02807</name>
</gene>
<accession>C9SEV5</accession>
<name>AMPP3_VERA1</name>
<keyword id="KW-0031">Aminopeptidase</keyword>
<keyword id="KW-0378">Hydrolase</keyword>
<keyword id="KW-0464">Manganese</keyword>
<keyword id="KW-0479">Metal-binding</keyword>
<keyword id="KW-0482">Metalloprotease</keyword>
<keyword id="KW-0645">Protease</keyword>
<keyword id="KW-1185">Reference proteome</keyword>
<feature type="chain" id="PRO_0000411892" description="Probable Xaa-Pro aminopeptidase PEPP">
    <location>
        <begin position="1"/>
        <end position="563"/>
    </location>
</feature>
<feature type="binding site" evidence="1">
    <location>
        <position position="331"/>
    </location>
    <ligand>
        <name>Mn(2+)</name>
        <dbReference type="ChEBI" id="CHEBI:29035"/>
        <label>2</label>
    </ligand>
</feature>
<feature type="binding site" evidence="1">
    <location>
        <position position="342"/>
    </location>
    <ligand>
        <name>Mn(2+)</name>
        <dbReference type="ChEBI" id="CHEBI:29035"/>
        <label>1</label>
    </ligand>
</feature>
<feature type="binding site" evidence="1">
    <location>
        <position position="342"/>
    </location>
    <ligand>
        <name>Mn(2+)</name>
        <dbReference type="ChEBI" id="CHEBI:29035"/>
        <label>2</label>
    </ligand>
</feature>
<feature type="binding site" evidence="1">
    <location>
        <position position="491"/>
    </location>
    <ligand>
        <name>Mn(2+)</name>
        <dbReference type="ChEBI" id="CHEBI:29035"/>
        <label>1</label>
    </ligand>
</feature>
<feature type="binding site" evidence="1">
    <location>
        <position position="532"/>
    </location>
    <ligand>
        <name>Mn(2+)</name>
        <dbReference type="ChEBI" id="CHEBI:29035"/>
        <label>1</label>
    </ligand>
</feature>
<feature type="binding site" evidence="1">
    <location>
        <position position="532"/>
    </location>
    <ligand>
        <name>Mn(2+)</name>
        <dbReference type="ChEBI" id="CHEBI:29035"/>
        <label>2</label>
    </ligand>
</feature>
<dbReference type="EC" id="3.4.11.9"/>
<dbReference type="EMBL" id="DS985216">
    <property type="protein sequence ID" value="EEY16698.1"/>
    <property type="molecule type" value="Genomic_DNA"/>
</dbReference>
<dbReference type="RefSeq" id="XP_003006668.1">
    <property type="nucleotide sequence ID" value="XM_003006622.1"/>
</dbReference>
<dbReference type="SMR" id="C9SEV5"/>
<dbReference type="STRING" id="526221.C9SEV5"/>
<dbReference type="GeneID" id="9532810"/>
<dbReference type="KEGG" id="val:VDBG_02807"/>
<dbReference type="eggNOG" id="KOG2737">
    <property type="taxonomic scope" value="Eukaryota"/>
</dbReference>
<dbReference type="HOGENOM" id="CLU_017266_1_2_1"/>
<dbReference type="OMA" id="CHTALMA"/>
<dbReference type="OrthoDB" id="10261878at2759"/>
<dbReference type="Proteomes" id="UP000008698">
    <property type="component" value="Unassembled WGS sequence"/>
</dbReference>
<dbReference type="GO" id="GO:0004177">
    <property type="term" value="F:aminopeptidase activity"/>
    <property type="evidence" value="ECO:0007669"/>
    <property type="project" value="UniProtKB-KW"/>
</dbReference>
<dbReference type="GO" id="GO:0046872">
    <property type="term" value="F:metal ion binding"/>
    <property type="evidence" value="ECO:0007669"/>
    <property type="project" value="UniProtKB-KW"/>
</dbReference>
<dbReference type="GO" id="GO:0008237">
    <property type="term" value="F:metallopeptidase activity"/>
    <property type="evidence" value="ECO:0007669"/>
    <property type="project" value="UniProtKB-KW"/>
</dbReference>
<dbReference type="GO" id="GO:0006508">
    <property type="term" value="P:proteolysis"/>
    <property type="evidence" value="ECO:0007669"/>
    <property type="project" value="UniProtKB-KW"/>
</dbReference>
<dbReference type="CDD" id="cd01087">
    <property type="entry name" value="Prolidase"/>
    <property type="match status" value="1"/>
</dbReference>
<dbReference type="Gene3D" id="3.90.230.10">
    <property type="entry name" value="Creatinase/methionine aminopeptidase superfamily"/>
    <property type="match status" value="1"/>
</dbReference>
<dbReference type="Gene3D" id="3.40.350.10">
    <property type="entry name" value="Creatinase/prolidase N-terminal domain"/>
    <property type="match status" value="1"/>
</dbReference>
<dbReference type="InterPro" id="IPR029149">
    <property type="entry name" value="Creatin/AminoP/Spt16_N"/>
</dbReference>
<dbReference type="InterPro" id="IPR036005">
    <property type="entry name" value="Creatinase/aminopeptidase-like"/>
</dbReference>
<dbReference type="InterPro" id="IPR000994">
    <property type="entry name" value="Pept_M24"/>
</dbReference>
<dbReference type="InterPro" id="IPR052433">
    <property type="entry name" value="X-Pro_dipept-like"/>
</dbReference>
<dbReference type="PANTHER" id="PTHR43226">
    <property type="entry name" value="XAA-PRO AMINOPEPTIDASE 3"/>
    <property type="match status" value="1"/>
</dbReference>
<dbReference type="PANTHER" id="PTHR43226:SF3">
    <property type="entry name" value="XAA-PRO AMINOPEPTIDASE AN0832-RELATED"/>
    <property type="match status" value="1"/>
</dbReference>
<dbReference type="Pfam" id="PF00557">
    <property type="entry name" value="Peptidase_M24"/>
    <property type="match status" value="1"/>
</dbReference>
<dbReference type="SUPFAM" id="SSF55920">
    <property type="entry name" value="Creatinase/aminopeptidase"/>
    <property type="match status" value="1"/>
</dbReference>
<dbReference type="SUPFAM" id="SSF53092">
    <property type="entry name" value="Creatinase/prolidase N-terminal domain"/>
    <property type="match status" value="1"/>
</dbReference>
<organism>
    <name type="scientific">Verticillium alfalfae (strain VaMs.102 / ATCC MYA-4576 / FGSC 10136)</name>
    <name type="common">Verticillium wilt of alfalfa</name>
    <name type="synonym">Verticillium albo-atrum</name>
    <dbReference type="NCBI Taxonomy" id="526221"/>
    <lineage>
        <taxon>Eukaryota</taxon>
        <taxon>Fungi</taxon>
        <taxon>Dikarya</taxon>
        <taxon>Ascomycota</taxon>
        <taxon>Pezizomycotina</taxon>
        <taxon>Sordariomycetes</taxon>
        <taxon>Hypocreomycetidae</taxon>
        <taxon>Glomerellales</taxon>
        <taxon>Plectosphaerellaceae</taxon>
        <taxon>Verticillium</taxon>
    </lineage>
</organism>
<reference key="1">
    <citation type="journal article" date="2011" name="PLoS Pathog.">
        <title>Comparative genomics yields insights into niche adaptation of plant vascular wilt pathogens.</title>
        <authorList>
            <person name="Klosterman S.J."/>
            <person name="Subbarao K.V."/>
            <person name="Kang S."/>
            <person name="Veronese P."/>
            <person name="Gold S.E."/>
            <person name="Thomma B.P.H.J."/>
            <person name="Chen Z."/>
            <person name="Henrissat B."/>
            <person name="Lee Y.-H."/>
            <person name="Park J."/>
            <person name="Garcia-Pedrajas M.D."/>
            <person name="Barbara D.J."/>
            <person name="Anchieta A."/>
            <person name="de Jonge R."/>
            <person name="Santhanam P."/>
            <person name="Maruthachalam K."/>
            <person name="Atallah Z."/>
            <person name="Amyotte S.G."/>
            <person name="Paz Z."/>
            <person name="Inderbitzin P."/>
            <person name="Hayes R.J."/>
            <person name="Heiman D.I."/>
            <person name="Young S."/>
            <person name="Zeng Q."/>
            <person name="Engels R."/>
            <person name="Galagan J."/>
            <person name="Cuomo C.A."/>
            <person name="Dobinson K.F."/>
            <person name="Ma L.-J."/>
        </authorList>
    </citation>
    <scope>NUCLEOTIDE SEQUENCE [LARGE SCALE GENOMIC DNA]</scope>
    <source>
        <strain>VaMs.102 / ATCC MYA-4576 / FGSC 10136</strain>
    </source>
</reference>
<sequence>MASGDNVDYEAVMVDEFDALNIEVRVSAGPSSSVPGAALSAPRCPGMRALPLKAPVMSTPVPAAAPLPTPPAVDDGPSAVGVGNVPPAVDDVPSAVDDVVIQKETTKYSAKLHAAKVADELKASAGLVFLPGEPSRTYEYSDMGPAFSSNAATSSTSPASTSLTPRKVLYNGRVPSIKDVLAASDVDEVRHMQDLPAFLHAYAHQHDKATVYLLDASQSHPALVDNARVHIDTAALRPAMDEARVTKTAHEIALIREANAVSSAAHRAVMRHIRRFASERQVAALFTAECTVRGAPTQAYAPIAGSGPNAATLHYGANDEPLAGRHVLVLDAGCEVNCYASDVTRTLPLGPTGHFTPEARHIYDLVERMQEACVAAVAPGLLYYSLHLKASAIALRGLLRLGILKGDEKAIWAAGTVAAFFPHGLGHHIGLETHDVTGRDRLLLAAGEREPRAKRDAVSAEMLVGLAAAVATGPPYRGKQMLRPGMVVTVEPGIYFNKDYIEGYFLREDKHRAFIDRDVLARYYPVGGVRIEDCILVTDDGYENLTKAPKGEDMLRIIRGEAQ</sequence>
<comment type="function">
    <text evidence="1">Catalyzes the removal of a penultimate prolyl residue from the N-termini of peptides.</text>
</comment>
<comment type="catalytic activity">
    <reaction>
        <text>Release of any N-terminal amino acid, including proline, that is linked to proline, even from a dipeptide or tripeptide.</text>
        <dbReference type="EC" id="3.4.11.9"/>
    </reaction>
</comment>
<comment type="cofactor">
    <cofactor evidence="1">
        <name>Mn(2+)</name>
        <dbReference type="ChEBI" id="CHEBI:29035"/>
    </cofactor>
    <text evidence="1">Binds 2 manganese ions per subunit.</text>
</comment>
<comment type="similarity">
    <text evidence="2">Belongs to the peptidase M24B family.</text>
</comment>
<evidence type="ECO:0000250" key="1"/>
<evidence type="ECO:0000305" key="2"/>
<proteinExistence type="inferred from homology"/>
<protein>
    <recommendedName>
        <fullName>Probable Xaa-Pro aminopeptidase PEPP</fullName>
        <ecNumber>3.4.11.9</ecNumber>
    </recommendedName>
    <alternativeName>
        <fullName>Aminoacylproline aminopeptidase</fullName>
    </alternativeName>
    <alternativeName>
        <fullName>Prolidase</fullName>
    </alternativeName>
</protein>